<protein>
    <recommendedName>
        <fullName evidence="1">ATP synthase epsilon chain</fullName>
    </recommendedName>
    <alternativeName>
        <fullName evidence="1">ATP synthase F1 sector epsilon subunit</fullName>
    </alternativeName>
    <alternativeName>
        <fullName evidence="1">F-ATPase epsilon subunit</fullName>
    </alternativeName>
</protein>
<dbReference type="EMBL" id="AE016823">
    <property type="protein sequence ID" value="AAS69850.1"/>
    <property type="molecule type" value="Genomic_DNA"/>
</dbReference>
<dbReference type="RefSeq" id="WP_001275641.1">
    <property type="nucleotide sequence ID" value="NC_005823.1"/>
</dbReference>
<dbReference type="SMR" id="Q72SX8"/>
<dbReference type="GeneID" id="61144561"/>
<dbReference type="KEGG" id="lic:LIC_11244"/>
<dbReference type="HOGENOM" id="CLU_084338_2_1_12"/>
<dbReference type="Proteomes" id="UP000007037">
    <property type="component" value="Chromosome I"/>
</dbReference>
<dbReference type="GO" id="GO:0005886">
    <property type="term" value="C:plasma membrane"/>
    <property type="evidence" value="ECO:0007669"/>
    <property type="project" value="UniProtKB-SubCell"/>
</dbReference>
<dbReference type="GO" id="GO:0045259">
    <property type="term" value="C:proton-transporting ATP synthase complex"/>
    <property type="evidence" value="ECO:0007669"/>
    <property type="project" value="UniProtKB-KW"/>
</dbReference>
<dbReference type="GO" id="GO:0005524">
    <property type="term" value="F:ATP binding"/>
    <property type="evidence" value="ECO:0007669"/>
    <property type="project" value="UniProtKB-UniRule"/>
</dbReference>
<dbReference type="GO" id="GO:0046933">
    <property type="term" value="F:proton-transporting ATP synthase activity, rotational mechanism"/>
    <property type="evidence" value="ECO:0007669"/>
    <property type="project" value="UniProtKB-UniRule"/>
</dbReference>
<dbReference type="CDD" id="cd12152">
    <property type="entry name" value="F1-ATPase_delta"/>
    <property type="match status" value="1"/>
</dbReference>
<dbReference type="Gene3D" id="2.60.15.10">
    <property type="entry name" value="F0F1 ATP synthase delta/epsilon subunit, N-terminal"/>
    <property type="match status" value="1"/>
</dbReference>
<dbReference type="HAMAP" id="MF_00530">
    <property type="entry name" value="ATP_synth_epsil_bac"/>
    <property type="match status" value="1"/>
</dbReference>
<dbReference type="InterPro" id="IPR001469">
    <property type="entry name" value="ATP_synth_F1_dsu/esu"/>
</dbReference>
<dbReference type="InterPro" id="IPR020546">
    <property type="entry name" value="ATP_synth_F1_dsu/esu_N"/>
</dbReference>
<dbReference type="InterPro" id="IPR036771">
    <property type="entry name" value="ATPsynth_dsu/esu_N"/>
</dbReference>
<dbReference type="NCBIfam" id="TIGR01216">
    <property type="entry name" value="ATP_synt_epsi"/>
    <property type="match status" value="1"/>
</dbReference>
<dbReference type="NCBIfam" id="NF009979">
    <property type="entry name" value="PRK13444.1"/>
    <property type="match status" value="1"/>
</dbReference>
<dbReference type="PANTHER" id="PTHR13822">
    <property type="entry name" value="ATP SYNTHASE DELTA/EPSILON CHAIN"/>
    <property type="match status" value="1"/>
</dbReference>
<dbReference type="PANTHER" id="PTHR13822:SF10">
    <property type="entry name" value="ATP SYNTHASE EPSILON CHAIN, CHLOROPLASTIC"/>
    <property type="match status" value="1"/>
</dbReference>
<dbReference type="Pfam" id="PF02823">
    <property type="entry name" value="ATP-synt_DE_N"/>
    <property type="match status" value="1"/>
</dbReference>
<dbReference type="SUPFAM" id="SSF51344">
    <property type="entry name" value="Epsilon subunit of F1F0-ATP synthase N-terminal domain"/>
    <property type="match status" value="1"/>
</dbReference>
<sequence length="127" mass="13791">MSANKLKVSVISPEKILYKGEVDSLIVPGSEGFFGILPNHAPLVATLGIGILEIRKGEKLKVLSVEGGFVEIKDNSISILTDHGALKEDIDLEVEKKNLAEAEKLPPSDSKNLFLQKTKTRILVASR</sequence>
<name>ATPE_LEPIC</name>
<accession>Q72SX8</accession>
<reference key="1">
    <citation type="journal article" date="2004" name="J. Bacteriol.">
        <title>Comparative genomics of two Leptospira interrogans serovars reveals novel insights into physiology and pathogenesis.</title>
        <authorList>
            <person name="Nascimento A.L.T.O."/>
            <person name="Ko A.I."/>
            <person name="Martins E.A.L."/>
            <person name="Monteiro-Vitorello C.B."/>
            <person name="Ho P.L."/>
            <person name="Haake D.A."/>
            <person name="Verjovski-Almeida S."/>
            <person name="Hartskeerl R.A."/>
            <person name="Marques M.V."/>
            <person name="Oliveira M.C."/>
            <person name="Menck C.F.M."/>
            <person name="Leite L.C.C."/>
            <person name="Carrer H."/>
            <person name="Coutinho L.L."/>
            <person name="Degrave W.M."/>
            <person name="Dellagostin O.A."/>
            <person name="El-Dorry H."/>
            <person name="Ferro E.S."/>
            <person name="Ferro M.I.T."/>
            <person name="Furlan L.R."/>
            <person name="Gamberini M."/>
            <person name="Giglioti E.A."/>
            <person name="Goes-Neto A."/>
            <person name="Goldman G.H."/>
            <person name="Goldman M.H.S."/>
            <person name="Harakava R."/>
            <person name="Jeronimo S.M.B."/>
            <person name="Junqueira-de-Azevedo I.L.M."/>
            <person name="Kimura E.T."/>
            <person name="Kuramae E.E."/>
            <person name="Lemos E.G.M."/>
            <person name="Lemos M.V.F."/>
            <person name="Marino C.L."/>
            <person name="Nunes L.R."/>
            <person name="de Oliveira R.C."/>
            <person name="Pereira G.G."/>
            <person name="Reis M.S."/>
            <person name="Schriefer A."/>
            <person name="Siqueira W.J."/>
            <person name="Sommer P."/>
            <person name="Tsai S.M."/>
            <person name="Simpson A.J.G."/>
            <person name="Ferro J.A."/>
            <person name="Camargo L.E.A."/>
            <person name="Kitajima J.P."/>
            <person name="Setubal J.C."/>
            <person name="Van Sluys M.A."/>
        </authorList>
    </citation>
    <scope>NUCLEOTIDE SEQUENCE [LARGE SCALE GENOMIC DNA]</scope>
    <source>
        <strain>Fiocruz L1-130</strain>
    </source>
</reference>
<feature type="chain" id="PRO_0000188150" description="ATP synthase epsilon chain">
    <location>
        <begin position="1"/>
        <end position="127"/>
    </location>
</feature>
<organism>
    <name type="scientific">Leptospira interrogans serogroup Icterohaemorrhagiae serovar copenhageni (strain Fiocruz L1-130)</name>
    <dbReference type="NCBI Taxonomy" id="267671"/>
    <lineage>
        <taxon>Bacteria</taxon>
        <taxon>Pseudomonadati</taxon>
        <taxon>Spirochaetota</taxon>
        <taxon>Spirochaetia</taxon>
        <taxon>Leptospirales</taxon>
        <taxon>Leptospiraceae</taxon>
        <taxon>Leptospira</taxon>
    </lineage>
</organism>
<proteinExistence type="inferred from homology"/>
<comment type="function">
    <text evidence="1">Produces ATP from ADP in the presence of a proton gradient across the membrane.</text>
</comment>
<comment type="subunit">
    <text>F-type ATPases have 2 components, CF(1) - the catalytic core - and CF(0) - the membrane proton channel. CF(1) has five subunits: alpha(3), beta(3), gamma(1), delta(1), epsilon(1). CF(0) has three main subunits: a, b and c.</text>
</comment>
<comment type="subcellular location">
    <subcellularLocation>
        <location evidence="1">Cell inner membrane</location>
        <topology evidence="1">Peripheral membrane protein</topology>
    </subcellularLocation>
</comment>
<comment type="similarity">
    <text evidence="1">Belongs to the ATPase epsilon chain family.</text>
</comment>
<keyword id="KW-0066">ATP synthesis</keyword>
<keyword id="KW-0997">Cell inner membrane</keyword>
<keyword id="KW-1003">Cell membrane</keyword>
<keyword id="KW-0139">CF(1)</keyword>
<keyword id="KW-0375">Hydrogen ion transport</keyword>
<keyword id="KW-0406">Ion transport</keyword>
<keyword id="KW-0472">Membrane</keyword>
<keyword id="KW-0813">Transport</keyword>
<evidence type="ECO:0000255" key="1">
    <source>
        <dbReference type="HAMAP-Rule" id="MF_00530"/>
    </source>
</evidence>
<gene>
    <name evidence="1" type="primary">atpC</name>
    <name type="ordered locus">LIC_11244</name>
</gene>